<protein>
    <recommendedName>
        <fullName>Protein transport protein Sec61 subunit beta</fullName>
    </recommendedName>
</protein>
<sequence length="96" mass="9974">MPGPTPSGTNVGSSGRSPSKAVAARAAGSTVRQRKNASCGTRSAGRTTSAGTGGMWRFYTEDSPGLKVGPVPVLVMSLLFIASVFMLHIWGKYTRS</sequence>
<accession>Q5RB31</accession>
<reference key="1">
    <citation type="submission" date="2004-11" db="EMBL/GenBank/DDBJ databases">
        <authorList>
            <consortium name="The German cDNA consortium"/>
        </authorList>
    </citation>
    <scope>NUCLEOTIDE SEQUENCE [LARGE SCALE MRNA]</scope>
    <source>
        <tissue>Kidney</tissue>
    </source>
</reference>
<dbReference type="EMBL" id="CR858826">
    <property type="protein sequence ID" value="CAH91029.1"/>
    <property type="molecule type" value="mRNA"/>
</dbReference>
<dbReference type="RefSeq" id="NP_001129010.1">
    <property type="nucleotide sequence ID" value="NM_001135538.1"/>
</dbReference>
<dbReference type="SMR" id="Q5RB31"/>
<dbReference type="FunCoup" id="Q5RB31">
    <property type="interactions" value="1655"/>
</dbReference>
<dbReference type="STRING" id="9601.ENSPPYP00000021785"/>
<dbReference type="Ensembl" id="ENSPPYT00000022675.2">
    <property type="protein sequence ID" value="ENSPPYP00000021785.1"/>
    <property type="gene ID" value="ENSPPYG00000019441.2"/>
</dbReference>
<dbReference type="GeneID" id="100190850"/>
<dbReference type="KEGG" id="pon:100190850"/>
<dbReference type="CTD" id="10952"/>
<dbReference type="eggNOG" id="KOG3457">
    <property type="taxonomic scope" value="Eukaryota"/>
</dbReference>
<dbReference type="GeneTree" id="ENSGT00390000003561"/>
<dbReference type="HOGENOM" id="CLU_133423_4_0_1"/>
<dbReference type="InParanoid" id="Q5RB31"/>
<dbReference type="OMA" id="SSGMWRF"/>
<dbReference type="OrthoDB" id="5401193at2759"/>
<dbReference type="TreeFam" id="TF313144"/>
<dbReference type="Proteomes" id="UP000001595">
    <property type="component" value="Chromosome 9"/>
</dbReference>
<dbReference type="GO" id="GO:0005789">
    <property type="term" value="C:endoplasmic reticulum membrane"/>
    <property type="evidence" value="ECO:0000250"/>
    <property type="project" value="UniProtKB"/>
</dbReference>
<dbReference type="GO" id="GO:0044322">
    <property type="term" value="C:endoplasmic reticulum quality control compartment"/>
    <property type="evidence" value="ECO:0007669"/>
    <property type="project" value="Ensembl"/>
</dbReference>
<dbReference type="GO" id="GO:0031205">
    <property type="term" value="C:endoplasmic reticulum Sec complex"/>
    <property type="evidence" value="ECO:0000250"/>
    <property type="project" value="UniProtKB"/>
</dbReference>
<dbReference type="GO" id="GO:0005784">
    <property type="term" value="C:Sec61 translocon complex"/>
    <property type="evidence" value="ECO:0007669"/>
    <property type="project" value="Ensembl"/>
</dbReference>
<dbReference type="GO" id="GO:0048408">
    <property type="term" value="F:epidermal growth factor binding"/>
    <property type="evidence" value="ECO:0007669"/>
    <property type="project" value="Ensembl"/>
</dbReference>
<dbReference type="GO" id="GO:0043022">
    <property type="term" value="F:ribosome binding"/>
    <property type="evidence" value="ECO:0000250"/>
    <property type="project" value="UniProtKB"/>
</dbReference>
<dbReference type="GO" id="GO:0030970">
    <property type="term" value="P:retrograde protein transport, ER to cytosol"/>
    <property type="evidence" value="ECO:0007669"/>
    <property type="project" value="Ensembl"/>
</dbReference>
<dbReference type="InterPro" id="IPR030671">
    <property type="entry name" value="Sec61-beta/Sbh"/>
</dbReference>
<dbReference type="InterPro" id="IPR016482">
    <property type="entry name" value="SecG/Sec61-beta/Sbh"/>
</dbReference>
<dbReference type="PANTHER" id="PTHR13509">
    <property type="entry name" value="SEC61 SUBUNIT BETA"/>
    <property type="match status" value="1"/>
</dbReference>
<dbReference type="Pfam" id="PF03911">
    <property type="entry name" value="Sec61_beta"/>
    <property type="match status" value="1"/>
</dbReference>
<dbReference type="PIRSF" id="PIRSF006398">
    <property type="entry name" value="Sec61_beta_euk"/>
    <property type="match status" value="1"/>
</dbReference>
<evidence type="ECO:0000250" key="1"/>
<evidence type="ECO:0000250" key="2">
    <source>
        <dbReference type="UniProtKB" id="P60467"/>
    </source>
</evidence>
<evidence type="ECO:0000250" key="3">
    <source>
        <dbReference type="UniProtKB" id="P60468"/>
    </source>
</evidence>
<evidence type="ECO:0000255" key="4"/>
<evidence type="ECO:0000256" key="5">
    <source>
        <dbReference type="SAM" id="MobiDB-lite"/>
    </source>
</evidence>
<evidence type="ECO:0000305" key="6"/>
<name>SC61B_PONAB</name>
<keyword id="KW-0007">Acetylation</keyword>
<keyword id="KW-0256">Endoplasmic reticulum</keyword>
<keyword id="KW-0449">Lipoprotein</keyword>
<keyword id="KW-0472">Membrane</keyword>
<keyword id="KW-0564">Palmitate</keyword>
<keyword id="KW-0597">Phosphoprotein</keyword>
<keyword id="KW-0653">Protein transport</keyword>
<keyword id="KW-1185">Reference proteome</keyword>
<keyword id="KW-0811">Translocation</keyword>
<keyword id="KW-0812">Transmembrane</keyword>
<keyword id="KW-1133">Transmembrane helix</keyword>
<keyword id="KW-0813">Transport</keyword>
<gene>
    <name type="primary">SEC61B</name>
</gene>
<proteinExistence type="inferred from homology"/>
<organism>
    <name type="scientific">Pongo abelii</name>
    <name type="common">Sumatran orangutan</name>
    <name type="synonym">Pongo pygmaeus abelii</name>
    <dbReference type="NCBI Taxonomy" id="9601"/>
    <lineage>
        <taxon>Eukaryota</taxon>
        <taxon>Metazoa</taxon>
        <taxon>Chordata</taxon>
        <taxon>Craniata</taxon>
        <taxon>Vertebrata</taxon>
        <taxon>Euteleostomi</taxon>
        <taxon>Mammalia</taxon>
        <taxon>Eutheria</taxon>
        <taxon>Euarchontoglires</taxon>
        <taxon>Primates</taxon>
        <taxon>Haplorrhini</taxon>
        <taxon>Catarrhini</taxon>
        <taxon>Hominidae</taxon>
        <taxon>Pongo</taxon>
    </lineage>
</organism>
<comment type="function">
    <text evidence="3">Component of SEC61 channel-forming translocon complex that mediates transport of signal peptide-containing precursor polypeptides across the endoplasmic reticulum (ER). Forms a ribosome receptor and a gated pore in the ER membrane, both functions required for cotranslational translocation of nascent polypeptides. The SEC61 channel is also involved in ER membrane insertion of transmembrane proteins: it mediates membrane insertion of the first few transmembrane segments of proteins, while insertion of subsequent transmembrane regions of multi-pass membrane proteins is mediated by the multi-pass translocon (MPT) complex. The SEC61 channel cooperates with the translocating protein TRAM1 to import nascent proteins into the ER.</text>
</comment>
<comment type="subunit">
    <text evidence="2 3">The SEC61 channel-forming translocon complex consists of channel-forming core components SEC61A1, SEC61B and SEC61G and different auxiliary components such as SEC62 and SEC63 (By similarity). The SEC61 channel associates with the multi-pass translocon (MPT) complex. Interacts with TRAM1 (By similarity).</text>
</comment>
<comment type="subcellular location">
    <subcellularLocation>
        <location evidence="3">Endoplasmic reticulum membrane</location>
        <topology evidence="4">Single-pass membrane protein</topology>
    </subcellularLocation>
</comment>
<comment type="similarity">
    <text evidence="6">Belongs to the SEC61-beta family.</text>
</comment>
<feature type="initiator methionine" description="Removed" evidence="3">
    <location>
        <position position="1"/>
    </location>
</feature>
<feature type="chain" id="PRO_0000157256" description="Protein transport protein Sec61 subunit beta">
    <location>
        <begin position="2"/>
        <end position="96"/>
    </location>
</feature>
<feature type="topological domain" description="Cytoplasmic" evidence="4">
    <location>
        <begin position="2"/>
        <end position="70"/>
    </location>
</feature>
<feature type="transmembrane region" description="Helical" evidence="4">
    <location>
        <begin position="71"/>
        <end position="91"/>
    </location>
</feature>
<feature type="topological domain" description="Extracellular" evidence="4">
    <location>
        <begin position="92"/>
        <end position="96"/>
    </location>
</feature>
<feature type="region of interest" description="Disordered" evidence="5">
    <location>
        <begin position="1"/>
        <end position="54"/>
    </location>
</feature>
<feature type="compositionally biased region" description="Polar residues" evidence="5">
    <location>
        <begin position="1"/>
        <end position="17"/>
    </location>
</feature>
<feature type="compositionally biased region" description="Low complexity" evidence="5">
    <location>
        <begin position="40"/>
        <end position="50"/>
    </location>
</feature>
<feature type="modified residue" description="N-acetylproline" evidence="3">
    <location>
        <position position="2"/>
    </location>
</feature>
<feature type="modified residue" description="Phosphoserine" evidence="3">
    <location>
        <position position="7"/>
    </location>
</feature>
<feature type="modified residue" description="Phosphothreonine" evidence="3">
    <location>
        <position position="9"/>
    </location>
</feature>
<feature type="modified residue" description="Phosphoserine" evidence="3">
    <location>
        <position position="13"/>
    </location>
</feature>
<feature type="modified residue" description="Phosphoserine" evidence="3">
    <location>
        <position position="14"/>
    </location>
</feature>
<feature type="modified residue" description="Phosphoserine" evidence="3">
    <location>
        <position position="17"/>
    </location>
</feature>
<feature type="lipid moiety-binding region" description="S-palmitoyl cysteine" evidence="1">
    <location>
        <position position="39"/>
    </location>
</feature>